<dbReference type="EMBL" id="AJ271079">
    <property type="protein sequence ID" value="CAB67147.2"/>
    <property type="molecule type" value="Genomic_DNA"/>
</dbReference>
<dbReference type="RefSeq" id="NP_084682.2">
    <property type="nucleotide sequence ID" value="NC_002693.2"/>
</dbReference>
<dbReference type="SMR" id="Q9MTM8"/>
<dbReference type="GeneID" id="802706"/>
<dbReference type="GO" id="GO:0009535">
    <property type="term" value="C:chloroplast thylakoid membrane"/>
    <property type="evidence" value="ECO:0007669"/>
    <property type="project" value="UniProtKB-SubCell"/>
</dbReference>
<dbReference type="GO" id="GO:0009523">
    <property type="term" value="C:photosystem II"/>
    <property type="evidence" value="ECO:0007669"/>
    <property type="project" value="UniProtKB-KW"/>
</dbReference>
<dbReference type="GO" id="GO:0019684">
    <property type="term" value="P:photosynthesis, light reaction"/>
    <property type="evidence" value="ECO:0007669"/>
    <property type="project" value="InterPro"/>
</dbReference>
<dbReference type="HAMAP" id="MF_00438">
    <property type="entry name" value="PSII_PsbM"/>
    <property type="match status" value="1"/>
</dbReference>
<dbReference type="InterPro" id="IPR007826">
    <property type="entry name" value="PSII_PsbM"/>
</dbReference>
<dbReference type="InterPro" id="IPR037269">
    <property type="entry name" value="PSII_PsbM_sf"/>
</dbReference>
<dbReference type="NCBIfam" id="TIGR03038">
    <property type="entry name" value="PS_II_psbM"/>
    <property type="match status" value="1"/>
</dbReference>
<dbReference type="PANTHER" id="PTHR35774">
    <property type="entry name" value="PHOTOSYSTEM II REACTION CENTER PROTEIN M"/>
    <property type="match status" value="1"/>
</dbReference>
<dbReference type="PANTHER" id="PTHR35774:SF1">
    <property type="entry name" value="PHOTOSYSTEM II REACTION CENTER PROTEIN M"/>
    <property type="match status" value="1"/>
</dbReference>
<dbReference type="Pfam" id="PF05151">
    <property type="entry name" value="PsbM"/>
    <property type="match status" value="1"/>
</dbReference>
<dbReference type="SUPFAM" id="SSF161033">
    <property type="entry name" value="Photosystem II reaction center protein M, PsbM"/>
    <property type="match status" value="1"/>
</dbReference>
<keyword id="KW-0150">Chloroplast</keyword>
<keyword id="KW-0472">Membrane</keyword>
<keyword id="KW-0602">Photosynthesis</keyword>
<keyword id="KW-0604">Photosystem II</keyword>
<keyword id="KW-0934">Plastid</keyword>
<keyword id="KW-0674">Reaction center</keyword>
<keyword id="KW-0793">Thylakoid</keyword>
<keyword id="KW-0812">Transmembrane</keyword>
<keyword id="KW-1133">Transmembrane helix</keyword>
<geneLocation type="chloroplast"/>
<proteinExistence type="inferred from homology"/>
<name>PSBM_OENEH</name>
<protein>
    <recommendedName>
        <fullName evidence="1">Photosystem II reaction center protein M</fullName>
        <shortName evidence="1">PSII-M</shortName>
    </recommendedName>
</protein>
<evidence type="ECO:0000255" key="1">
    <source>
        <dbReference type="HAMAP-Rule" id="MF_00438"/>
    </source>
</evidence>
<organism>
    <name type="scientific">Oenothera elata subsp. hookeri</name>
    <name type="common">Hooker's evening primrose</name>
    <name type="synonym">Oenothera hookeri</name>
    <dbReference type="NCBI Taxonomy" id="85636"/>
    <lineage>
        <taxon>Eukaryota</taxon>
        <taxon>Viridiplantae</taxon>
        <taxon>Streptophyta</taxon>
        <taxon>Embryophyta</taxon>
        <taxon>Tracheophyta</taxon>
        <taxon>Spermatophyta</taxon>
        <taxon>Magnoliopsida</taxon>
        <taxon>eudicotyledons</taxon>
        <taxon>Gunneridae</taxon>
        <taxon>Pentapetalae</taxon>
        <taxon>rosids</taxon>
        <taxon>malvids</taxon>
        <taxon>Myrtales</taxon>
        <taxon>Onagraceae</taxon>
        <taxon>Onagroideae</taxon>
        <taxon>Onagreae</taxon>
        <taxon>Oenothera</taxon>
    </lineage>
</organism>
<feature type="chain" id="PRO_0000217564" description="Photosystem II reaction center protein M">
    <location>
        <begin position="1"/>
        <end position="34"/>
    </location>
</feature>
<feature type="transmembrane region" description="Helical" evidence="1">
    <location>
        <begin position="5"/>
        <end position="25"/>
    </location>
</feature>
<gene>
    <name evidence="1" type="primary">psbM</name>
</gene>
<sequence>MEVNILAFIATALFILVPTAFLLIIYVKTVSQSD</sequence>
<accession>Q9MTM8</accession>
<comment type="function">
    <text evidence="1">One of the components of the core complex of photosystem II (PSII). PSII is a light-driven water:plastoquinone oxidoreductase that uses light energy to abstract electrons from H(2)O, generating O(2) and a proton gradient subsequently used for ATP formation. It consists of a core antenna complex that captures photons, and an electron transfer chain that converts photonic excitation into a charge separation. This subunit is found at the monomer-monomer interface.</text>
</comment>
<comment type="subunit">
    <text evidence="1">PSII is composed of 1 copy each of membrane proteins PsbA, PsbB, PsbC, PsbD, PsbE, PsbF, PsbH, PsbI, PsbJ, PsbK, PsbL, PsbM, PsbT, PsbX, PsbY, PsbZ, Psb30/Ycf12, at least 3 peripheral proteins of the oxygen-evolving complex and a large number of cofactors. It forms dimeric complexes.</text>
</comment>
<comment type="subcellular location">
    <subcellularLocation>
        <location evidence="1">Plastid</location>
        <location evidence="1">Chloroplast thylakoid membrane</location>
        <topology evidence="1">Single-pass membrane protein</topology>
    </subcellularLocation>
</comment>
<comment type="similarity">
    <text evidence="1">Belongs to the PsbM family.</text>
</comment>
<reference key="1">
    <citation type="journal article" date="2000" name="Mol. Gen. Genet.">
        <title>Complete nucleotide sequence of the Oenothera elata plastid chromosome, representing plastome I of the five distinguishable Euoenothera plastomes.</title>
        <authorList>
            <person name="Hupfer H."/>
            <person name="Swiatek M."/>
            <person name="Hornung S."/>
            <person name="Herrmann R.G."/>
            <person name="Maier R.M."/>
            <person name="Chiu W.-L."/>
            <person name="Sears B."/>
        </authorList>
    </citation>
    <scope>NUCLEOTIDE SEQUENCE [LARGE SCALE GENOMIC DNA]</scope>
    <source>
        <strain>cv. Johansen</strain>
    </source>
</reference>
<reference key="2">
    <citation type="journal article" date="2008" name="Nucleic Acids Res.">
        <title>The complete nucleotide sequences of the five genetically distinct plastid genomes of Oenothera, subsection Oenothera: I. Sequence evaluation and plastome evolution.</title>
        <authorList>
            <person name="Greiner S."/>
            <person name="Wang X."/>
            <person name="Rauwolf U."/>
            <person name="Silber M.V."/>
            <person name="Mayer K."/>
            <person name="Meurer J."/>
            <person name="Haberer G."/>
            <person name="Herrmann R.G."/>
        </authorList>
    </citation>
    <scope>SEQUENCE REVISION TO 34</scope>
</reference>